<keyword id="KW-0066">ATP synthesis</keyword>
<keyword id="KW-0067">ATP-binding</keyword>
<keyword id="KW-0997">Cell inner membrane</keyword>
<keyword id="KW-1003">Cell membrane</keyword>
<keyword id="KW-0139">CF(1)</keyword>
<keyword id="KW-0375">Hydrogen ion transport</keyword>
<keyword id="KW-0406">Ion transport</keyword>
<keyword id="KW-0472">Membrane</keyword>
<keyword id="KW-0547">Nucleotide-binding</keyword>
<keyword id="KW-1185">Reference proteome</keyword>
<keyword id="KW-1278">Translocase</keyword>
<keyword id="KW-0813">Transport</keyword>
<gene>
    <name evidence="1" type="primary">atpA</name>
    <name type="ordered locus">SRU_0915</name>
</gene>
<protein>
    <recommendedName>
        <fullName evidence="1">ATP synthase subunit alpha</fullName>
        <ecNumber evidence="1">7.1.2.2</ecNumber>
    </recommendedName>
    <alternativeName>
        <fullName evidence="1">ATP synthase F1 sector subunit alpha</fullName>
    </alternativeName>
    <alternativeName>
        <fullName evidence="1">F-ATPase subunit alpha</fullName>
    </alternativeName>
</protein>
<evidence type="ECO:0000255" key="1">
    <source>
        <dbReference type="HAMAP-Rule" id="MF_01346"/>
    </source>
</evidence>
<comment type="function">
    <text evidence="1">Produces ATP from ADP in the presence of a proton gradient across the membrane. The alpha chain is a regulatory subunit.</text>
</comment>
<comment type="catalytic activity">
    <reaction evidence="1">
        <text>ATP + H2O + 4 H(+)(in) = ADP + phosphate + 5 H(+)(out)</text>
        <dbReference type="Rhea" id="RHEA:57720"/>
        <dbReference type="ChEBI" id="CHEBI:15377"/>
        <dbReference type="ChEBI" id="CHEBI:15378"/>
        <dbReference type="ChEBI" id="CHEBI:30616"/>
        <dbReference type="ChEBI" id="CHEBI:43474"/>
        <dbReference type="ChEBI" id="CHEBI:456216"/>
        <dbReference type="EC" id="7.1.2.2"/>
    </reaction>
</comment>
<comment type="subunit">
    <text evidence="1">F-type ATPases have 2 components, CF(1) - the catalytic core - and CF(0) - the membrane proton channel. CF(1) has five subunits: alpha(3), beta(3), gamma(1), delta(1), epsilon(1). CF(0) has three main subunits: a(1), b(2) and c(9-12). The alpha and beta chains form an alternating ring which encloses part of the gamma chain. CF(1) is attached to CF(0) by a central stalk formed by the gamma and epsilon chains, while a peripheral stalk is formed by the delta and b chains.</text>
</comment>
<comment type="subcellular location">
    <subcellularLocation>
        <location evidence="1">Cell inner membrane</location>
        <topology evidence="1">Peripheral membrane protein</topology>
    </subcellularLocation>
</comment>
<comment type="similarity">
    <text evidence="1">Belongs to the ATPase alpha/beta chains family.</text>
</comment>
<dbReference type="EC" id="7.1.2.2" evidence="1"/>
<dbReference type="EMBL" id="CP000159">
    <property type="protein sequence ID" value="ABC43981.1"/>
    <property type="molecule type" value="Genomic_DNA"/>
</dbReference>
<dbReference type="RefSeq" id="WP_011403677.1">
    <property type="nucleotide sequence ID" value="NC_007677.1"/>
</dbReference>
<dbReference type="RefSeq" id="YP_445049.1">
    <property type="nucleotide sequence ID" value="NC_007677.1"/>
</dbReference>
<dbReference type="SMR" id="Q2S432"/>
<dbReference type="STRING" id="309807.SRU_0915"/>
<dbReference type="EnsemblBacteria" id="ABC43981">
    <property type="protein sequence ID" value="ABC43981"/>
    <property type="gene ID" value="SRU_0915"/>
</dbReference>
<dbReference type="GeneID" id="83727842"/>
<dbReference type="KEGG" id="sru:SRU_0915"/>
<dbReference type="PATRIC" id="fig|309807.25.peg.949"/>
<dbReference type="eggNOG" id="COG0056">
    <property type="taxonomic scope" value="Bacteria"/>
</dbReference>
<dbReference type="HOGENOM" id="CLU_010091_2_1_10"/>
<dbReference type="OrthoDB" id="9803053at2"/>
<dbReference type="Proteomes" id="UP000008674">
    <property type="component" value="Chromosome"/>
</dbReference>
<dbReference type="GO" id="GO:0005886">
    <property type="term" value="C:plasma membrane"/>
    <property type="evidence" value="ECO:0007669"/>
    <property type="project" value="UniProtKB-SubCell"/>
</dbReference>
<dbReference type="GO" id="GO:0045259">
    <property type="term" value="C:proton-transporting ATP synthase complex"/>
    <property type="evidence" value="ECO:0007669"/>
    <property type="project" value="UniProtKB-KW"/>
</dbReference>
<dbReference type="GO" id="GO:0043531">
    <property type="term" value="F:ADP binding"/>
    <property type="evidence" value="ECO:0007669"/>
    <property type="project" value="TreeGrafter"/>
</dbReference>
<dbReference type="GO" id="GO:0005524">
    <property type="term" value="F:ATP binding"/>
    <property type="evidence" value="ECO:0007669"/>
    <property type="project" value="UniProtKB-UniRule"/>
</dbReference>
<dbReference type="GO" id="GO:0046933">
    <property type="term" value="F:proton-transporting ATP synthase activity, rotational mechanism"/>
    <property type="evidence" value="ECO:0007669"/>
    <property type="project" value="UniProtKB-UniRule"/>
</dbReference>
<dbReference type="CDD" id="cd18113">
    <property type="entry name" value="ATP-synt_F1_alpha_C"/>
    <property type="match status" value="1"/>
</dbReference>
<dbReference type="CDD" id="cd18116">
    <property type="entry name" value="ATP-synt_F1_alpha_N"/>
    <property type="match status" value="1"/>
</dbReference>
<dbReference type="CDD" id="cd01132">
    <property type="entry name" value="F1-ATPase_alpha_CD"/>
    <property type="match status" value="1"/>
</dbReference>
<dbReference type="FunFam" id="1.20.150.20:FF:000001">
    <property type="entry name" value="ATP synthase subunit alpha"/>
    <property type="match status" value="1"/>
</dbReference>
<dbReference type="FunFam" id="3.40.50.300:FF:000002">
    <property type="entry name" value="ATP synthase subunit alpha"/>
    <property type="match status" value="1"/>
</dbReference>
<dbReference type="Gene3D" id="2.40.30.20">
    <property type="match status" value="1"/>
</dbReference>
<dbReference type="Gene3D" id="1.20.150.20">
    <property type="entry name" value="ATP synthase alpha/beta chain, C-terminal domain"/>
    <property type="match status" value="1"/>
</dbReference>
<dbReference type="Gene3D" id="3.40.50.300">
    <property type="entry name" value="P-loop containing nucleotide triphosphate hydrolases"/>
    <property type="match status" value="1"/>
</dbReference>
<dbReference type="HAMAP" id="MF_01346">
    <property type="entry name" value="ATP_synth_alpha_bact"/>
    <property type="match status" value="1"/>
</dbReference>
<dbReference type="InterPro" id="IPR023366">
    <property type="entry name" value="ATP_synth_asu-like_sf"/>
</dbReference>
<dbReference type="InterPro" id="IPR000793">
    <property type="entry name" value="ATP_synth_asu_C"/>
</dbReference>
<dbReference type="InterPro" id="IPR038376">
    <property type="entry name" value="ATP_synth_asu_C_sf"/>
</dbReference>
<dbReference type="InterPro" id="IPR033732">
    <property type="entry name" value="ATP_synth_F1_a_nt-bd_dom"/>
</dbReference>
<dbReference type="InterPro" id="IPR005294">
    <property type="entry name" value="ATP_synth_F1_asu"/>
</dbReference>
<dbReference type="InterPro" id="IPR020003">
    <property type="entry name" value="ATPase_a/bsu_AS"/>
</dbReference>
<dbReference type="InterPro" id="IPR004100">
    <property type="entry name" value="ATPase_F1/V1/A1_a/bsu_N"/>
</dbReference>
<dbReference type="InterPro" id="IPR036121">
    <property type="entry name" value="ATPase_F1/V1/A1_a/bsu_N_sf"/>
</dbReference>
<dbReference type="InterPro" id="IPR000194">
    <property type="entry name" value="ATPase_F1/V1/A1_a/bsu_nucl-bd"/>
</dbReference>
<dbReference type="InterPro" id="IPR027417">
    <property type="entry name" value="P-loop_NTPase"/>
</dbReference>
<dbReference type="NCBIfam" id="TIGR00962">
    <property type="entry name" value="atpA"/>
    <property type="match status" value="1"/>
</dbReference>
<dbReference type="NCBIfam" id="NF009884">
    <property type="entry name" value="PRK13343.1"/>
    <property type="match status" value="1"/>
</dbReference>
<dbReference type="PANTHER" id="PTHR48082">
    <property type="entry name" value="ATP SYNTHASE SUBUNIT ALPHA, MITOCHONDRIAL"/>
    <property type="match status" value="1"/>
</dbReference>
<dbReference type="PANTHER" id="PTHR48082:SF2">
    <property type="entry name" value="ATP SYNTHASE SUBUNIT ALPHA, MITOCHONDRIAL"/>
    <property type="match status" value="1"/>
</dbReference>
<dbReference type="Pfam" id="PF00006">
    <property type="entry name" value="ATP-synt_ab"/>
    <property type="match status" value="1"/>
</dbReference>
<dbReference type="Pfam" id="PF00306">
    <property type="entry name" value="ATP-synt_ab_C"/>
    <property type="match status" value="1"/>
</dbReference>
<dbReference type="Pfam" id="PF02874">
    <property type="entry name" value="ATP-synt_ab_N"/>
    <property type="match status" value="1"/>
</dbReference>
<dbReference type="PIRSF" id="PIRSF039088">
    <property type="entry name" value="F_ATPase_subunit_alpha"/>
    <property type="match status" value="1"/>
</dbReference>
<dbReference type="SUPFAM" id="SSF47917">
    <property type="entry name" value="C-terminal domain of alpha and beta subunits of F1 ATP synthase"/>
    <property type="match status" value="1"/>
</dbReference>
<dbReference type="SUPFAM" id="SSF50615">
    <property type="entry name" value="N-terminal domain of alpha and beta subunits of F1 ATP synthase"/>
    <property type="match status" value="1"/>
</dbReference>
<dbReference type="SUPFAM" id="SSF52540">
    <property type="entry name" value="P-loop containing nucleoside triphosphate hydrolases"/>
    <property type="match status" value="1"/>
</dbReference>
<dbReference type="PROSITE" id="PS00152">
    <property type="entry name" value="ATPASE_ALPHA_BETA"/>
    <property type="match status" value="1"/>
</dbReference>
<organism>
    <name type="scientific">Salinibacter ruber (strain DSM 13855 / M31)</name>
    <dbReference type="NCBI Taxonomy" id="309807"/>
    <lineage>
        <taxon>Bacteria</taxon>
        <taxon>Pseudomonadati</taxon>
        <taxon>Rhodothermota</taxon>
        <taxon>Rhodothermia</taxon>
        <taxon>Rhodothermales</taxon>
        <taxon>Salinibacteraceae</taxon>
        <taxon>Salinibacter</taxon>
    </lineage>
</organism>
<name>ATPA_SALRD</name>
<sequence>MSNGSIRPDEVTDILRRELGDFETEAEEYEAGTVLEAGDGIATLYGLSNAQASELVEFPEQDVEGMVLNLEEDNVGVILFGDVDAVSEGDEARRTGRIASVGVNENMLGRVIDPLGRPLDGKGPIEGEKTVLPLERKAPGVIYREPVEEPLQTGIKAIDSMIPVGRGQRELVIGDRQTGKTAVLTDTIINQKKTHQEGTDSGDPVYCVYVAVGQKDSTVAQVQRDLERNGALEHTVIVNASASMPTPLQYVAPFAGACIGEYFRDTGRDSLVCFDDLSKQAVAYRELSLLLRRPPGREAYPGDIFYLHSRLLERAAKIISDEEVATQMNGLPDALQDKVQGGGSLTALPVIETQAGDVSAYIPTNVISITDGQIYLETDLFNSGIRPAIDVGNSVSRVGGSAQIDAMKDVASTLRIDLSQYRELEAFAKFGSDLDPSTQQQLNRGERLVEILNQDQFSPVPVEEQVAIIYAAINGHLDDVPVDDIEDFEEEYLERLRLRHEDVLTEIRETEELTDAAEEVFEEVAADMADVYAEDEEEEEEDVLADEGATA</sequence>
<accession>Q2S432</accession>
<reference key="1">
    <citation type="journal article" date="2005" name="Proc. Natl. Acad. Sci. U.S.A.">
        <title>The genome of Salinibacter ruber: convergence and gene exchange among hyperhalophilic bacteria and archaea.</title>
        <authorList>
            <person name="Mongodin E.F."/>
            <person name="Nelson K.E."/>
            <person name="Daugherty S."/>
            <person name="DeBoy R.T."/>
            <person name="Wister J."/>
            <person name="Khouri H."/>
            <person name="Weidman J."/>
            <person name="Walsh D.A."/>
            <person name="Papke R.T."/>
            <person name="Sanchez Perez G."/>
            <person name="Sharma A.K."/>
            <person name="Nesbo C.L."/>
            <person name="MacLeod D."/>
            <person name="Bapteste E."/>
            <person name="Doolittle W.F."/>
            <person name="Charlebois R.L."/>
            <person name="Legault B."/>
            <person name="Rodriguez-Valera F."/>
        </authorList>
    </citation>
    <scope>NUCLEOTIDE SEQUENCE [LARGE SCALE GENOMIC DNA]</scope>
    <source>
        <strain>DSM 13855 / CECT 5946 / M31</strain>
    </source>
</reference>
<proteinExistence type="inferred from homology"/>
<feature type="chain" id="PRO_0000238346" description="ATP synthase subunit alpha">
    <location>
        <begin position="1"/>
        <end position="551"/>
    </location>
</feature>
<feature type="binding site" evidence="1">
    <location>
        <begin position="174"/>
        <end position="181"/>
    </location>
    <ligand>
        <name>ATP</name>
        <dbReference type="ChEBI" id="CHEBI:30616"/>
    </ligand>
</feature>
<feature type="site" description="Required for activity" evidence="1">
    <location>
        <position position="394"/>
    </location>
</feature>